<sequence length="473" mass="52741">MSELSTYKGYSPKHGDKVPVLQNLNDLTPKDFYDKFIATRTPVIIKSSLPESDWKGYLWQQQDYLLSKIGDIVCKVEPIDPVSGTFGQGMSRNEMSIKEFFQKLKNGERLYLTTQYDESNEVLDGDDEVSLLVKSLCPHPTDGLLTDFSITPALMGNLVPQQCNLWIGKSENGTSSGLHHDFHDNIYAVISGYKRFVIISPDHANQLKLSGKISKIHPNGLISYEGEDCPQRSDGLTELDAAIAKTQFLEKKIGSLKELAVPQESIELLEAEYENEMDRVLQMQIGGPEEDWNDLEEGDAASLLDGSVGGDPESDILLNEGNDIEATSLQDTKPELPDHFTKVSVNGLHKFMGFDDAKNVDVDKDELSALAGTVPLVVDLEPGDMLYLPASWFHEVTSSSASSGGSDVHIAFNYWFHPPDNLEDFDHPYLDRNIWQAKRHLVGEAIDQLYATNKKNEKRPAEDDSPSQKKTCQ</sequence>
<name>JMJ4_SCHPO</name>
<organism>
    <name type="scientific">Schizosaccharomyces pombe (strain 972 / ATCC 24843)</name>
    <name type="common">Fission yeast</name>
    <dbReference type="NCBI Taxonomy" id="284812"/>
    <lineage>
        <taxon>Eukaryota</taxon>
        <taxon>Fungi</taxon>
        <taxon>Dikarya</taxon>
        <taxon>Ascomycota</taxon>
        <taxon>Taphrinomycotina</taxon>
        <taxon>Schizosaccharomycetes</taxon>
        <taxon>Schizosaccharomycetales</taxon>
        <taxon>Schizosaccharomycetaceae</taxon>
        <taxon>Schizosaccharomyces</taxon>
    </lineage>
</organism>
<comment type="function">
    <text evidence="3">Has a role in meiosis.</text>
</comment>
<comment type="subcellular location">
    <subcellularLocation>
        <location evidence="4">Nucleus</location>
    </subcellularLocation>
</comment>
<reference key="1">
    <citation type="journal article" date="2002" name="Nature">
        <title>The genome sequence of Schizosaccharomyces pombe.</title>
        <authorList>
            <person name="Wood V."/>
            <person name="Gwilliam R."/>
            <person name="Rajandream M.A."/>
            <person name="Lyne M.H."/>
            <person name="Lyne R."/>
            <person name="Stewart A."/>
            <person name="Sgouros J.G."/>
            <person name="Peat N."/>
            <person name="Hayles J."/>
            <person name="Baker S.G."/>
            <person name="Basham D."/>
            <person name="Bowman S."/>
            <person name="Brooks K."/>
            <person name="Brown D."/>
            <person name="Brown S."/>
            <person name="Chillingworth T."/>
            <person name="Churcher C.M."/>
            <person name="Collins M."/>
            <person name="Connor R."/>
            <person name="Cronin A."/>
            <person name="Davis P."/>
            <person name="Feltwell T."/>
            <person name="Fraser A."/>
            <person name="Gentles S."/>
            <person name="Goble A."/>
            <person name="Hamlin N."/>
            <person name="Harris D.E."/>
            <person name="Hidalgo J."/>
            <person name="Hodgson G."/>
            <person name="Holroyd S."/>
            <person name="Hornsby T."/>
            <person name="Howarth S."/>
            <person name="Huckle E.J."/>
            <person name="Hunt S."/>
            <person name="Jagels K."/>
            <person name="James K.D."/>
            <person name="Jones L."/>
            <person name="Jones M."/>
            <person name="Leather S."/>
            <person name="McDonald S."/>
            <person name="McLean J."/>
            <person name="Mooney P."/>
            <person name="Moule S."/>
            <person name="Mungall K.L."/>
            <person name="Murphy L.D."/>
            <person name="Niblett D."/>
            <person name="Odell C."/>
            <person name="Oliver K."/>
            <person name="O'Neil S."/>
            <person name="Pearson D."/>
            <person name="Quail M.A."/>
            <person name="Rabbinowitsch E."/>
            <person name="Rutherford K.M."/>
            <person name="Rutter S."/>
            <person name="Saunders D."/>
            <person name="Seeger K."/>
            <person name="Sharp S."/>
            <person name="Skelton J."/>
            <person name="Simmonds M.N."/>
            <person name="Squares R."/>
            <person name="Squares S."/>
            <person name="Stevens K."/>
            <person name="Taylor K."/>
            <person name="Taylor R.G."/>
            <person name="Tivey A."/>
            <person name="Walsh S.V."/>
            <person name="Warren T."/>
            <person name="Whitehead S."/>
            <person name="Woodward J.R."/>
            <person name="Volckaert G."/>
            <person name="Aert R."/>
            <person name="Robben J."/>
            <person name="Grymonprez B."/>
            <person name="Weltjens I."/>
            <person name="Vanstreels E."/>
            <person name="Rieger M."/>
            <person name="Schaefer M."/>
            <person name="Mueller-Auer S."/>
            <person name="Gabel C."/>
            <person name="Fuchs M."/>
            <person name="Duesterhoeft A."/>
            <person name="Fritzc C."/>
            <person name="Holzer E."/>
            <person name="Moestl D."/>
            <person name="Hilbert H."/>
            <person name="Borzym K."/>
            <person name="Langer I."/>
            <person name="Beck A."/>
            <person name="Lehrach H."/>
            <person name="Reinhardt R."/>
            <person name="Pohl T.M."/>
            <person name="Eger P."/>
            <person name="Zimmermann W."/>
            <person name="Wedler H."/>
            <person name="Wambutt R."/>
            <person name="Purnelle B."/>
            <person name="Goffeau A."/>
            <person name="Cadieu E."/>
            <person name="Dreano S."/>
            <person name="Gloux S."/>
            <person name="Lelaure V."/>
            <person name="Mottier S."/>
            <person name="Galibert F."/>
            <person name="Aves S.J."/>
            <person name="Xiang Z."/>
            <person name="Hunt C."/>
            <person name="Moore K."/>
            <person name="Hurst S.M."/>
            <person name="Lucas M."/>
            <person name="Rochet M."/>
            <person name="Gaillardin C."/>
            <person name="Tallada V.A."/>
            <person name="Garzon A."/>
            <person name="Thode G."/>
            <person name="Daga R.R."/>
            <person name="Cruzado L."/>
            <person name="Jimenez J."/>
            <person name="Sanchez M."/>
            <person name="del Rey F."/>
            <person name="Benito J."/>
            <person name="Dominguez A."/>
            <person name="Revuelta J.L."/>
            <person name="Moreno S."/>
            <person name="Armstrong J."/>
            <person name="Forsburg S.L."/>
            <person name="Cerutti L."/>
            <person name="Lowe T."/>
            <person name="McCombie W.R."/>
            <person name="Paulsen I."/>
            <person name="Potashkin J."/>
            <person name="Shpakovski G.V."/>
            <person name="Ussery D."/>
            <person name="Barrell B.G."/>
            <person name="Nurse P."/>
        </authorList>
    </citation>
    <scope>NUCLEOTIDE SEQUENCE [LARGE SCALE GENOMIC DNA]</scope>
    <source>
        <strain>972 / ATCC 24843</strain>
    </source>
</reference>
<reference key="2">
    <citation type="journal article" date="2005" name="Curr. Biol.">
        <title>A large-scale screen in S. pombe identifies seven novel genes required for critical meiotic events.</title>
        <authorList>
            <person name="Martin-Castellanos C."/>
            <person name="Blanco M."/>
            <person name="Rozalen A.E."/>
            <person name="Perez-Hidalgo L."/>
            <person name="Garcia A.I."/>
            <person name="Conde F."/>
            <person name="Mata J."/>
            <person name="Ellermeier C."/>
            <person name="Davis L."/>
            <person name="San-Segundo P."/>
            <person name="Smith G.R."/>
            <person name="Moreno S."/>
        </authorList>
    </citation>
    <scope>FUNCTION IN MEIOSIS</scope>
</reference>
<reference key="3">
    <citation type="journal article" date="2006" name="Nat. Biotechnol.">
        <title>ORFeome cloning and global analysis of protein localization in the fission yeast Schizosaccharomyces pombe.</title>
        <authorList>
            <person name="Matsuyama A."/>
            <person name="Arai R."/>
            <person name="Yashiroda Y."/>
            <person name="Shirai A."/>
            <person name="Kamata A."/>
            <person name="Sekido S."/>
            <person name="Kobayashi Y."/>
            <person name="Hashimoto A."/>
            <person name="Hamamoto M."/>
            <person name="Hiraoka Y."/>
            <person name="Horinouchi S."/>
            <person name="Yoshida M."/>
        </authorList>
    </citation>
    <scope>SUBCELLULAR LOCATION [LARGE SCALE ANALYSIS]</scope>
</reference>
<gene>
    <name type="primary">jmj4</name>
    <name type="synonym">mug149</name>
    <name type="ORF">SPCC622.19</name>
</gene>
<evidence type="ECO:0000255" key="1">
    <source>
        <dbReference type="PROSITE-ProRule" id="PRU00538"/>
    </source>
</evidence>
<evidence type="ECO:0000256" key="2">
    <source>
        <dbReference type="SAM" id="MobiDB-lite"/>
    </source>
</evidence>
<evidence type="ECO:0000269" key="3">
    <source>
    </source>
</evidence>
<evidence type="ECO:0000269" key="4">
    <source>
    </source>
</evidence>
<keyword id="KW-0469">Meiosis</keyword>
<keyword id="KW-0539">Nucleus</keyword>
<keyword id="KW-1185">Reference proteome</keyword>
<protein>
    <recommendedName>
        <fullName>JmjC domain-containing protein 4</fullName>
    </recommendedName>
    <alternativeName>
        <fullName>Jumonji domain-containing protein 4</fullName>
    </alternativeName>
    <alternativeName>
        <fullName>Meiotically up-regulated gene 149 protein</fullName>
    </alternativeName>
</protein>
<feature type="chain" id="PRO_0000300500" description="JmjC domain-containing protein 4">
    <location>
        <begin position="1"/>
        <end position="473"/>
    </location>
</feature>
<feature type="domain" description="JmjC" evidence="1">
    <location>
        <begin position="140"/>
        <end position="433"/>
    </location>
</feature>
<feature type="region of interest" description="Disordered" evidence="2">
    <location>
        <begin position="452"/>
        <end position="473"/>
    </location>
</feature>
<accession>O94606</accession>
<dbReference type="EMBL" id="CU329672">
    <property type="protein sequence ID" value="CAA21875.2"/>
    <property type="molecule type" value="Genomic_DNA"/>
</dbReference>
<dbReference type="PIR" id="T41500">
    <property type="entry name" value="T41500"/>
</dbReference>
<dbReference type="RefSeq" id="NP_588191.1">
    <property type="nucleotide sequence ID" value="NM_001023181.2"/>
</dbReference>
<dbReference type="BioGRID" id="275989">
    <property type="interactions" value="39"/>
</dbReference>
<dbReference type="STRING" id="284812.O94606"/>
<dbReference type="iPTMnet" id="O94606"/>
<dbReference type="PaxDb" id="4896-SPCC622.19.1"/>
<dbReference type="EnsemblFungi" id="SPCC622.19.1">
    <property type="protein sequence ID" value="SPCC622.19.1:pep"/>
    <property type="gene ID" value="SPCC622.19"/>
</dbReference>
<dbReference type="GeneID" id="2539424"/>
<dbReference type="KEGG" id="spo:2539424"/>
<dbReference type="PomBase" id="SPCC622.19">
    <property type="gene designation" value="jmj4"/>
</dbReference>
<dbReference type="VEuPathDB" id="FungiDB:SPCC622.19"/>
<dbReference type="eggNOG" id="KOG2508">
    <property type="taxonomic scope" value="Eukaryota"/>
</dbReference>
<dbReference type="HOGENOM" id="CLU_017405_0_0_1"/>
<dbReference type="InParanoid" id="O94606"/>
<dbReference type="OMA" id="PASWWHE"/>
<dbReference type="PhylomeDB" id="O94606"/>
<dbReference type="PRO" id="PR:O94606"/>
<dbReference type="Proteomes" id="UP000002485">
    <property type="component" value="Chromosome III"/>
</dbReference>
<dbReference type="GO" id="GO:0000785">
    <property type="term" value="C:chromatin"/>
    <property type="evidence" value="ECO:0000255"/>
    <property type="project" value="PomBase"/>
</dbReference>
<dbReference type="GO" id="GO:0005634">
    <property type="term" value="C:nucleus"/>
    <property type="evidence" value="ECO:0007005"/>
    <property type="project" value="PomBase"/>
</dbReference>
<dbReference type="GO" id="GO:0016706">
    <property type="term" value="F:2-oxoglutarate-dependent dioxygenase activity"/>
    <property type="evidence" value="ECO:0000318"/>
    <property type="project" value="GO_Central"/>
</dbReference>
<dbReference type="GO" id="GO:0032452">
    <property type="term" value="F:histone demethylase activity"/>
    <property type="evidence" value="ECO:0000255"/>
    <property type="project" value="PomBase"/>
</dbReference>
<dbReference type="GO" id="GO:0106155">
    <property type="term" value="F:peptidyl-lysine 3-dioxygenase activity"/>
    <property type="evidence" value="ECO:0000250"/>
    <property type="project" value="PomBase"/>
</dbReference>
<dbReference type="GO" id="GO:0006338">
    <property type="term" value="P:chromatin remodeling"/>
    <property type="evidence" value="ECO:0000255"/>
    <property type="project" value="PomBase"/>
</dbReference>
<dbReference type="GO" id="GO:0051321">
    <property type="term" value="P:meiotic cell cycle"/>
    <property type="evidence" value="ECO:0007669"/>
    <property type="project" value="UniProtKB-KW"/>
</dbReference>
<dbReference type="FunFam" id="2.60.120.650:FF:000091">
    <property type="entry name" value="Chromosome 10, whole genome shotgun sequence"/>
    <property type="match status" value="1"/>
</dbReference>
<dbReference type="Gene3D" id="2.60.120.650">
    <property type="entry name" value="Cupin"/>
    <property type="match status" value="1"/>
</dbReference>
<dbReference type="InterPro" id="IPR041667">
    <property type="entry name" value="Cupin_8"/>
</dbReference>
<dbReference type="InterPro" id="IPR003347">
    <property type="entry name" value="JmjC_dom"/>
</dbReference>
<dbReference type="PANTHER" id="PTHR12461">
    <property type="entry name" value="HYPOXIA-INDUCIBLE FACTOR 1 ALPHA INHIBITOR-RELATED"/>
    <property type="match status" value="1"/>
</dbReference>
<dbReference type="PANTHER" id="PTHR12461:SF100">
    <property type="entry name" value="JMJC DOMAIN-CONTAINING PROTEIN 4"/>
    <property type="match status" value="1"/>
</dbReference>
<dbReference type="Pfam" id="PF13621">
    <property type="entry name" value="Cupin_8"/>
    <property type="match status" value="1"/>
</dbReference>
<dbReference type="SMART" id="SM00558">
    <property type="entry name" value="JmjC"/>
    <property type="match status" value="1"/>
</dbReference>
<dbReference type="SUPFAM" id="SSF51197">
    <property type="entry name" value="Clavaminate synthase-like"/>
    <property type="match status" value="1"/>
</dbReference>
<dbReference type="PROSITE" id="PS51184">
    <property type="entry name" value="JMJC"/>
    <property type="match status" value="1"/>
</dbReference>
<proteinExistence type="evidence at protein level"/>